<gene>
    <name type="primary">MDH1</name>
    <name type="ordered locus">At1g04410</name>
    <name type="ORF">F19P19.13</name>
</gene>
<dbReference type="EC" id="1.1.1.37" evidence="6"/>
<dbReference type="EMBL" id="AC000104">
    <property type="protein sequence ID" value="AAB70434.1"/>
    <property type="molecule type" value="Genomic_DNA"/>
</dbReference>
<dbReference type="EMBL" id="CP002684">
    <property type="protein sequence ID" value="AEE27694.1"/>
    <property type="molecule type" value="Genomic_DNA"/>
</dbReference>
<dbReference type="EMBL" id="AY050374">
    <property type="protein sequence ID" value="AAK91392.1"/>
    <property type="molecule type" value="mRNA"/>
</dbReference>
<dbReference type="EMBL" id="AY065134">
    <property type="protein sequence ID" value="AAL38310.1"/>
    <property type="molecule type" value="mRNA"/>
</dbReference>
<dbReference type="EMBL" id="AY081563">
    <property type="protein sequence ID" value="AAM10125.1"/>
    <property type="molecule type" value="mRNA"/>
</dbReference>
<dbReference type="EMBL" id="AY133655">
    <property type="protein sequence ID" value="AAM91485.1"/>
    <property type="molecule type" value="mRNA"/>
</dbReference>
<dbReference type="EMBL" id="AY088023">
    <property type="protein sequence ID" value="AAM65569.1"/>
    <property type="molecule type" value="mRNA"/>
</dbReference>
<dbReference type="PIR" id="B86176">
    <property type="entry name" value="B86176"/>
</dbReference>
<dbReference type="PDB" id="5NUE">
    <property type="method" value="X-ray"/>
    <property type="resolution" value="1.35 A"/>
    <property type="chains" value="A/B/C=1-332"/>
</dbReference>
<dbReference type="PDB" id="5NUF">
    <property type="method" value="X-ray"/>
    <property type="resolution" value="1.80 A"/>
    <property type="chains" value="A/B/C=1-332"/>
</dbReference>
<dbReference type="PDBsum" id="5NUE"/>
<dbReference type="PDBsum" id="5NUF"/>
<dbReference type="SMR" id="P93819"/>
<dbReference type="BioGRID" id="24762">
    <property type="interactions" value="15"/>
</dbReference>
<dbReference type="FunCoup" id="P93819">
    <property type="interactions" value="2563"/>
</dbReference>
<dbReference type="IntAct" id="P93819">
    <property type="interactions" value="4"/>
</dbReference>
<dbReference type="STRING" id="3702.P93819"/>
<dbReference type="iPTMnet" id="P93819"/>
<dbReference type="MetOSite" id="P93819"/>
<dbReference type="PaxDb" id="3702-AT1G04410.1"/>
<dbReference type="ProteomicsDB" id="238771"/>
<dbReference type="EnsemblPlants" id="AT1G04410.1">
    <property type="protein sequence ID" value="AT1G04410.1"/>
    <property type="gene ID" value="AT1G04410"/>
</dbReference>
<dbReference type="GeneID" id="839527"/>
<dbReference type="Gramene" id="AT1G04410.1">
    <property type="protein sequence ID" value="AT1G04410.1"/>
    <property type="gene ID" value="AT1G04410"/>
</dbReference>
<dbReference type="KEGG" id="ath:AT1G04410"/>
<dbReference type="Araport" id="AT1G04410"/>
<dbReference type="TAIR" id="AT1G04410">
    <property type="gene designation" value="C-NAD-MDH1"/>
</dbReference>
<dbReference type="eggNOG" id="KOG1496">
    <property type="taxonomic scope" value="Eukaryota"/>
</dbReference>
<dbReference type="HOGENOM" id="CLU_040727_2_0_1"/>
<dbReference type="InParanoid" id="P93819"/>
<dbReference type="OMA" id="GMIGSNM"/>
<dbReference type="PhylomeDB" id="P93819"/>
<dbReference type="BRENDA" id="1.1.1.37">
    <property type="organism ID" value="399"/>
</dbReference>
<dbReference type="CD-CODE" id="4299E36E">
    <property type="entry name" value="Nucleolus"/>
</dbReference>
<dbReference type="PRO" id="PR:P93819"/>
<dbReference type="Proteomes" id="UP000006548">
    <property type="component" value="Chromosome 1"/>
</dbReference>
<dbReference type="ExpressionAtlas" id="P93819">
    <property type="expression patterns" value="baseline and differential"/>
</dbReference>
<dbReference type="GO" id="GO:0048046">
    <property type="term" value="C:apoplast"/>
    <property type="evidence" value="ECO:0007005"/>
    <property type="project" value="TAIR"/>
</dbReference>
<dbReference type="GO" id="GO:0009507">
    <property type="term" value="C:chloroplast"/>
    <property type="evidence" value="ECO:0007005"/>
    <property type="project" value="TAIR"/>
</dbReference>
<dbReference type="GO" id="GO:0009570">
    <property type="term" value="C:chloroplast stroma"/>
    <property type="evidence" value="ECO:0007005"/>
    <property type="project" value="TAIR"/>
</dbReference>
<dbReference type="GO" id="GO:0005829">
    <property type="term" value="C:cytosol"/>
    <property type="evidence" value="ECO:0007005"/>
    <property type="project" value="TAIR"/>
</dbReference>
<dbReference type="GO" id="GO:0005576">
    <property type="term" value="C:extracellular region"/>
    <property type="evidence" value="ECO:0007005"/>
    <property type="project" value="TAIR"/>
</dbReference>
<dbReference type="GO" id="GO:0005634">
    <property type="term" value="C:nucleus"/>
    <property type="evidence" value="ECO:0007005"/>
    <property type="project" value="TAIR"/>
</dbReference>
<dbReference type="GO" id="GO:0000325">
    <property type="term" value="C:plant-type vacuole"/>
    <property type="evidence" value="ECO:0007005"/>
    <property type="project" value="TAIR"/>
</dbReference>
<dbReference type="GO" id="GO:0005886">
    <property type="term" value="C:plasma membrane"/>
    <property type="evidence" value="ECO:0007005"/>
    <property type="project" value="TAIR"/>
</dbReference>
<dbReference type="GO" id="GO:0009506">
    <property type="term" value="C:plasmodesma"/>
    <property type="evidence" value="ECO:0007005"/>
    <property type="project" value="TAIR"/>
</dbReference>
<dbReference type="GO" id="GO:0030060">
    <property type="term" value="F:L-malate dehydrogenase (NAD+) activity"/>
    <property type="evidence" value="ECO:0007669"/>
    <property type="project" value="UniProtKB-EC"/>
</dbReference>
<dbReference type="GO" id="GO:0003729">
    <property type="term" value="F:mRNA binding"/>
    <property type="evidence" value="ECO:0000314"/>
    <property type="project" value="TAIR"/>
</dbReference>
<dbReference type="GO" id="GO:0006108">
    <property type="term" value="P:malate metabolic process"/>
    <property type="evidence" value="ECO:0007669"/>
    <property type="project" value="InterPro"/>
</dbReference>
<dbReference type="GO" id="GO:0010043">
    <property type="term" value="P:response to zinc ion"/>
    <property type="evidence" value="ECO:0000270"/>
    <property type="project" value="TAIR"/>
</dbReference>
<dbReference type="GO" id="GO:0006099">
    <property type="term" value="P:tricarboxylic acid cycle"/>
    <property type="evidence" value="ECO:0007669"/>
    <property type="project" value="UniProtKB-KW"/>
</dbReference>
<dbReference type="CDD" id="cd01336">
    <property type="entry name" value="MDH_cytoplasmic_cytosolic"/>
    <property type="match status" value="1"/>
</dbReference>
<dbReference type="FunFam" id="3.40.50.720:FF:000010">
    <property type="entry name" value="Malate dehydrogenase"/>
    <property type="match status" value="1"/>
</dbReference>
<dbReference type="FunFam" id="3.90.110.10:FF:000002">
    <property type="entry name" value="Malate dehydrogenase"/>
    <property type="match status" value="1"/>
</dbReference>
<dbReference type="Gene3D" id="3.90.110.10">
    <property type="entry name" value="Lactate dehydrogenase/glycoside hydrolase, family 4, C-terminal"/>
    <property type="match status" value="1"/>
</dbReference>
<dbReference type="Gene3D" id="3.40.50.720">
    <property type="entry name" value="NAD(P)-binding Rossmann-like Domain"/>
    <property type="match status" value="1"/>
</dbReference>
<dbReference type="InterPro" id="IPR001557">
    <property type="entry name" value="L-lactate/malate_DH"/>
</dbReference>
<dbReference type="InterPro" id="IPR022383">
    <property type="entry name" value="Lactate/malate_DH_C"/>
</dbReference>
<dbReference type="InterPro" id="IPR001236">
    <property type="entry name" value="Lactate/malate_DH_N"/>
</dbReference>
<dbReference type="InterPro" id="IPR015955">
    <property type="entry name" value="Lactate_DH/Glyco_Ohase_4_C"/>
</dbReference>
<dbReference type="InterPro" id="IPR001252">
    <property type="entry name" value="Malate_DH_AS"/>
</dbReference>
<dbReference type="InterPro" id="IPR011274">
    <property type="entry name" value="Malate_DH_NAD-dep_euk"/>
</dbReference>
<dbReference type="InterPro" id="IPR010945">
    <property type="entry name" value="Malate_DH_type2"/>
</dbReference>
<dbReference type="InterPro" id="IPR036291">
    <property type="entry name" value="NAD(P)-bd_dom_sf"/>
</dbReference>
<dbReference type="NCBIfam" id="TIGR01759">
    <property type="entry name" value="MalateDH-SF1"/>
    <property type="match status" value="1"/>
</dbReference>
<dbReference type="NCBIfam" id="TIGR01758">
    <property type="entry name" value="MDH_euk_cyt"/>
    <property type="match status" value="1"/>
</dbReference>
<dbReference type="NCBIfam" id="NF003916">
    <property type="entry name" value="PRK05442.1"/>
    <property type="match status" value="1"/>
</dbReference>
<dbReference type="PANTHER" id="PTHR23382">
    <property type="entry name" value="MALATE DEHYDROGENASE"/>
    <property type="match status" value="1"/>
</dbReference>
<dbReference type="Pfam" id="PF02866">
    <property type="entry name" value="Ldh_1_C"/>
    <property type="match status" value="1"/>
</dbReference>
<dbReference type="Pfam" id="PF00056">
    <property type="entry name" value="Ldh_1_N"/>
    <property type="match status" value="1"/>
</dbReference>
<dbReference type="PIRSF" id="PIRSF000102">
    <property type="entry name" value="Lac_mal_DH"/>
    <property type="match status" value="1"/>
</dbReference>
<dbReference type="SUPFAM" id="SSF56327">
    <property type="entry name" value="LDH C-terminal domain-like"/>
    <property type="match status" value="1"/>
</dbReference>
<dbReference type="SUPFAM" id="SSF51735">
    <property type="entry name" value="NAD(P)-binding Rossmann-fold domains"/>
    <property type="match status" value="1"/>
</dbReference>
<dbReference type="PROSITE" id="PS00068">
    <property type="entry name" value="MDH"/>
    <property type="match status" value="1"/>
</dbReference>
<reference key="1">
    <citation type="journal article" date="2000" name="Nature">
        <title>Sequence and analysis of chromosome 1 of the plant Arabidopsis thaliana.</title>
        <authorList>
            <person name="Theologis A."/>
            <person name="Ecker J.R."/>
            <person name="Palm C.J."/>
            <person name="Federspiel N.A."/>
            <person name="Kaul S."/>
            <person name="White O."/>
            <person name="Alonso J."/>
            <person name="Altafi H."/>
            <person name="Araujo R."/>
            <person name="Bowman C.L."/>
            <person name="Brooks S.Y."/>
            <person name="Buehler E."/>
            <person name="Chan A."/>
            <person name="Chao Q."/>
            <person name="Chen H."/>
            <person name="Cheuk R.F."/>
            <person name="Chin C.W."/>
            <person name="Chung M.K."/>
            <person name="Conn L."/>
            <person name="Conway A.B."/>
            <person name="Conway A.R."/>
            <person name="Creasy T.H."/>
            <person name="Dewar K."/>
            <person name="Dunn P."/>
            <person name="Etgu P."/>
            <person name="Feldblyum T.V."/>
            <person name="Feng J.-D."/>
            <person name="Fong B."/>
            <person name="Fujii C.Y."/>
            <person name="Gill J.E."/>
            <person name="Goldsmith A.D."/>
            <person name="Haas B."/>
            <person name="Hansen N.F."/>
            <person name="Hughes B."/>
            <person name="Huizar L."/>
            <person name="Hunter J.L."/>
            <person name="Jenkins J."/>
            <person name="Johnson-Hopson C."/>
            <person name="Khan S."/>
            <person name="Khaykin E."/>
            <person name="Kim C.J."/>
            <person name="Koo H.L."/>
            <person name="Kremenetskaia I."/>
            <person name="Kurtz D.B."/>
            <person name="Kwan A."/>
            <person name="Lam B."/>
            <person name="Langin-Hooper S."/>
            <person name="Lee A."/>
            <person name="Lee J.M."/>
            <person name="Lenz C.A."/>
            <person name="Li J.H."/>
            <person name="Li Y.-P."/>
            <person name="Lin X."/>
            <person name="Liu S.X."/>
            <person name="Liu Z.A."/>
            <person name="Luros J.S."/>
            <person name="Maiti R."/>
            <person name="Marziali A."/>
            <person name="Militscher J."/>
            <person name="Miranda M."/>
            <person name="Nguyen M."/>
            <person name="Nierman W.C."/>
            <person name="Osborne B.I."/>
            <person name="Pai G."/>
            <person name="Peterson J."/>
            <person name="Pham P.K."/>
            <person name="Rizzo M."/>
            <person name="Rooney T."/>
            <person name="Rowley D."/>
            <person name="Sakano H."/>
            <person name="Salzberg S.L."/>
            <person name="Schwartz J.R."/>
            <person name="Shinn P."/>
            <person name="Southwick A.M."/>
            <person name="Sun H."/>
            <person name="Tallon L.J."/>
            <person name="Tambunga G."/>
            <person name="Toriumi M.J."/>
            <person name="Town C.D."/>
            <person name="Utterback T."/>
            <person name="Van Aken S."/>
            <person name="Vaysberg M."/>
            <person name="Vysotskaia V.S."/>
            <person name="Walker M."/>
            <person name="Wu D."/>
            <person name="Yu G."/>
            <person name="Fraser C.M."/>
            <person name="Venter J.C."/>
            <person name="Davis R.W."/>
        </authorList>
    </citation>
    <scope>NUCLEOTIDE SEQUENCE [LARGE SCALE GENOMIC DNA]</scope>
    <source>
        <strain>cv. Columbia</strain>
    </source>
</reference>
<reference key="2">
    <citation type="journal article" date="2017" name="Plant J.">
        <title>Araport11: a complete reannotation of the Arabidopsis thaliana reference genome.</title>
        <authorList>
            <person name="Cheng C.Y."/>
            <person name="Krishnakumar V."/>
            <person name="Chan A.P."/>
            <person name="Thibaud-Nissen F."/>
            <person name="Schobel S."/>
            <person name="Town C.D."/>
        </authorList>
    </citation>
    <scope>GENOME REANNOTATION</scope>
    <source>
        <strain>cv. Columbia</strain>
    </source>
</reference>
<reference key="3">
    <citation type="journal article" date="2003" name="Science">
        <title>Empirical analysis of transcriptional activity in the Arabidopsis genome.</title>
        <authorList>
            <person name="Yamada K."/>
            <person name="Lim J."/>
            <person name="Dale J.M."/>
            <person name="Chen H."/>
            <person name="Shinn P."/>
            <person name="Palm C.J."/>
            <person name="Southwick A.M."/>
            <person name="Wu H.C."/>
            <person name="Kim C.J."/>
            <person name="Nguyen M."/>
            <person name="Pham P.K."/>
            <person name="Cheuk R.F."/>
            <person name="Karlin-Newmann G."/>
            <person name="Liu S.X."/>
            <person name="Lam B."/>
            <person name="Sakano H."/>
            <person name="Wu T."/>
            <person name="Yu G."/>
            <person name="Miranda M."/>
            <person name="Quach H.L."/>
            <person name="Tripp M."/>
            <person name="Chang C.H."/>
            <person name="Lee J.M."/>
            <person name="Toriumi M.J."/>
            <person name="Chan M.M."/>
            <person name="Tang C.C."/>
            <person name="Onodera C.S."/>
            <person name="Deng J.M."/>
            <person name="Akiyama K."/>
            <person name="Ansari Y."/>
            <person name="Arakawa T."/>
            <person name="Banh J."/>
            <person name="Banno F."/>
            <person name="Bowser L."/>
            <person name="Brooks S.Y."/>
            <person name="Carninci P."/>
            <person name="Chao Q."/>
            <person name="Choy N."/>
            <person name="Enju A."/>
            <person name="Goldsmith A.D."/>
            <person name="Gurjal M."/>
            <person name="Hansen N.F."/>
            <person name="Hayashizaki Y."/>
            <person name="Johnson-Hopson C."/>
            <person name="Hsuan V.W."/>
            <person name="Iida K."/>
            <person name="Karnes M."/>
            <person name="Khan S."/>
            <person name="Koesema E."/>
            <person name="Ishida J."/>
            <person name="Jiang P.X."/>
            <person name="Jones T."/>
            <person name="Kawai J."/>
            <person name="Kamiya A."/>
            <person name="Meyers C."/>
            <person name="Nakajima M."/>
            <person name="Narusaka M."/>
            <person name="Seki M."/>
            <person name="Sakurai T."/>
            <person name="Satou M."/>
            <person name="Tamse R."/>
            <person name="Vaysberg M."/>
            <person name="Wallender E.K."/>
            <person name="Wong C."/>
            <person name="Yamamura Y."/>
            <person name="Yuan S."/>
            <person name="Shinozaki K."/>
            <person name="Davis R.W."/>
            <person name="Theologis A."/>
            <person name="Ecker J.R."/>
        </authorList>
    </citation>
    <scope>NUCLEOTIDE SEQUENCE [LARGE SCALE MRNA]</scope>
    <source>
        <strain>cv. Columbia</strain>
    </source>
</reference>
<reference key="4">
    <citation type="submission" date="2002-03" db="EMBL/GenBank/DDBJ databases">
        <title>Full-length cDNA from Arabidopsis thaliana.</title>
        <authorList>
            <person name="Brover V.V."/>
            <person name="Troukhan M.E."/>
            <person name="Alexandrov N.A."/>
            <person name="Lu Y.-P."/>
            <person name="Flavell R.B."/>
            <person name="Feldmann K.A."/>
        </authorList>
    </citation>
    <scope>NUCLEOTIDE SEQUENCE [LARGE SCALE MRNA]</scope>
</reference>
<reference key="5">
    <citation type="journal article" date="2009" name="Plant J.">
        <title>Tandem affinity purification and mass spectrometric analysis of ubiquitylated proteins in Arabidopsis.</title>
        <authorList>
            <person name="Saracco S.A."/>
            <person name="Hansson M."/>
            <person name="Scalf M."/>
            <person name="Walker J.M."/>
            <person name="Smith L.M."/>
            <person name="Vierstra R.D."/>
        </authorList>
    </citation>
    <scope>UBIQUITINATION [LARGE SCALE ANALYSIS] AT LYS-119</scope>
    <scope>IDENTIFICATION BY MASS SPECTROMETRY</scope>
</reference>
<reference key="6">
    <citation type="journal article" date="2010" name="Plant Physiol.">
        <title>Mitochondrial malate dehydrogenase lowers leaf respiration and alters photorespiration and plant growth in Arabidopsis.</title>
        <authorList>
            <person name="Tomaz T."/>
            <person name="Bagard M."/>
            <person name="Pracharoenwattana I."/>
            <person name="Linden P."/>
            <person name="Lee C.P."/>
            <person name="Carroll A.J."/>
            <person name="Stroeher E."/>
            <person name="Smith S.M."/>
            <person name="Gardestroem P."/>
            <person name="Millar A.H."/>
        </authorList>
    </citation>
    <scope>FUNCTION</scope>
    <scope>TISSUE SPECIFICITY</scope>
</reference>
<reference key="7">
    <citation type="journal article" date="2011" name="BMC Syst. Biol.">
        <title>Determining novel functions of Arabidopsis 14-3-3 proteins in central metabolic processes.</title>
        <authorList>
            <person name="Diaz C."/>
            <person name="Kusano M."/>
            <person name="Sulpice R."/>
            <person name="Araki M."/>
            <person name="Redestig H."/>
            <person name="Saito K."/>
            <person name="Stitt M."/>
            <person name="Shin R."/>
        </authorList>
    </citation>
    <scope>INTERACTION WITH GRF1; GRF3 AND GRF8</scope>
</reference>
<reference key="8">
    <citation type="journal article" date="2018" name="J. Exp. Bot.">
        <title>Self-protection of cytosolic malate dehydrogenase against oxidative stress in Arabidopsis.</title>
        <authorList>
            <person name="Huang J."/>
            <person name="Niazi A.K."/>
            <person name="Young D."/>
            <person name="Rosado L.A."/>
            <person name="Vertommen D."/>
            <person name="Bodra N."/>
            <person name="Abdelgawwad M.R."/>
            <person name="Vignols F."/>
            <person name="Wei B."/>
            <person name="Wahni K."/>
            <person name="Bashandy T."/>
            <person name="Bariat L."/>
            <person name="Van Breusegem F."/>
            <person name="Messens J."/>
            <person name="Reichheld J.P."/>
        </authorList>
    </citation>
    <scope>X-RAY CRYSTALLOGRAPHY (1.35 ANGSTROMS) IN COMPLEX WITH NAD AND OXALOACETATE</scope>
    <scope>CATALYTIC ACTIVITY</scope>
    <scope>ACTIVITY REGULATION</scope>
    <scope>BIOPHYSICOCHEMICAL PROPERTIES</scope>
    <scope>SUBUNIT</scope>
    <scope>DISULFIDE BOND</scope>
    <scope>INTERACTION WITH TRX1; TRX2; TRX3; TRX4 AND TRX5</scope>
    <scope>OXIDATION AT MET-56 AND MET-97</scope>
</reference>
<accession>P93819</accession>
<keyword id="KW-0002">3D-structure</keyword>
<keyword id="KW-0963">Cytoplasm</keyword>
<keyword id="KW-1015">Disulfide bond</keyword>
<keyword id="KW-1017">Isopeptide bond</keyword>
<keyword id="KW-0520">NAD</keyword>
<keyword id="KW-0558">Oxidation</keyword>
<keyword id="KW-0560">Oxidoreductase</keyword>
<keyword id="KW-1185">Reference proteome</keyword>
<keyword id="KW-0816">Tricarboxylic acid cycle</keyword>
<keyword id="KW-0832">Ubl conjugation</keyword>
<feature type="chain" id="PRO_0000113412" description="Malate dehydrogenase 1, cytoplasmic">
    <location>
        <begin position="1"/>
        <end position="332"/>
    </location>
</feature>
<feature type="active site" description="Proton acceptor" evidence="1">
    <location>
        <position position="188"/>
    </location>
</feature>
<feature type="binding site" evidence="6 10 11">
    <location>
        <begin position="16"/>
        <end position="17"/>
    </location>
    <ligand>
        <name>NAD(+)</name>
        <dbReference type="ChEBI" id="CHEBI:57540"/>
    </ligand>
</feature>
<feature type="binding site" evidence="6 10 11">
    <location>
        <position position="43"/>
    </location>
    <ligand>
        <name>NAD(+)</name>
        <dbReference type="ChEBI" id="CHEBI:57540"/>
    </ligand>
</feature>
<feature type="binding site" evidence="6 10 11">
    <location>
        <position position="90"/>
    </location>
    <ligand>
        <name>NAD(+)</name>
        <dbReference type="ChEBI" id="CHEBI:57540"/>
    </ligand>
</feature>
<feature type="binding site" evidence="6 10 11">
    <location>
        <position position="99"/>
    </location>
    <ligand>
        <name>oxaloacetate</name>
        <dbReference type="ChEBI" id="CHEBI:16452"/>
    </ligand>
</feature>
<feature type="binding site" evidence="6 10 11">
    <location>
        <position position="113"/>
    </location>
    <ligand>
        <name>NAD(+)</name>
        <dbReference type="ChEBI" id="CHEBI:57540"/>
    </ligand>
</feature>
<feature type="binding site" evidence="6 10 11">
    <location>
        <position position="132"/>
    </location>
    <ligand>
        <name>NAD(+)</name>
        <dbReference type="ChEBI" id="CHEBI:57540"/>
    </ligand>
</feature>
<feature type="binding site" evidence="6 10 11">
    <location>
        <position position="132"/>
    </location>
    <ligand>
        <name>oxaloacetate</name>
        <dbReference type="ChEBI" id="CHEBI:16452"/>
    </ligand>
</feature>
<feature type="binding site" evidence="6 10 11">
    <location>
        <position position="163"/>
    </location>
    <ligand>
        <name>oxaloacetate</name>
        <dbReference type="ChEBI" id="CHEBI:16452"/>
    </ligand>
</feature>
<feature type="binding site" evidence="6 10 11">
    <location>
        <position position="188"/>
    </location>
    <ligand>
        <name>oxaloacetate</name>
        <dbReference type="ChEBI" id="CHEBI:16452"/>
    </ligand>
</feature>
<feature type="binding site" evidence="6 10 11">
    <location>
        <position position="243"/>
    </location>
    <ligand>
        <name>oxaloacetate</name>
        <dbReference type="ChEBI" id="CHEBI:16452"/>
    </ligand>
</feature>
<feature type="modified residue" description="Methionine sulfoxide" evidence="6">
    <location>
        <position position="56"/>
    </location>
</feature>
<feature type="modified residue" description="Methionine sulfoxide" evidence="6">
    <location>
        <position position="97"/>
    </location>
</feature>
<feature type="disulfide bond" description="Interchain; in linked form" evidence="6">
    <location>
        <position position="330"/>
    </location>
</feature>
<feature type="cross-link" description="Glycyl lysine isopeptide (Lys-Gly) (interchain with G-Cter in ubiquitin)" evidence="3">
    <location>
        <position position="119"/>
    </location>
</feature>
<feature type="strand" evidence="12">
    <location>
        <begin position="6"/>
        <end position="11"/>
    </location>
</feature>
<feature type="turn" evidence="12">
    <location>
        <begin position="12"/>
        <end position="14"/>
    </location>
</feature>
<feature type="helix" evidence="12">
    <location>
        <begin position="16"/>
        <end position="26"/>
    </location>
</feature>
<feature type="turn" evidence="12">
    <location>
        <begin position="27"/>
        <end position="31"/>
    </location>
</feature>
<feature type="strand" evidence="12">
    <location>
        <begin position="37"/>
        <end position="42"/>
    </location>
</feature>
<feature type="helix" evidence="12">
    <location>
        <begin position="45"/>
        <end position="47"/>
    </location>
</feature>
<feature type="helix" evidence="12">
    <location>
        <begin position="48"/>
        <end position="60"/>
    </location>
</feature>
<feature type="strand" evidence="12">
    <location>
        <begin position="66"/>
        <end position="73"/>
    </location>
</feature>
<feature type="helix" evidence="12">
    <location>
        <begin position="75"/>
        <end position="79"/>
    </location>
</feature>
<feature type="strand" evidence="12">
    <location>
        <begin position="83"/>
        <end position="87"/>
    </location>
</feature>
<feature type="helix" evidence="12">
    <location>
        <begin position="99"/>
        <end position="120"/>
    </location>
</feature>
<feature type="strand" evidence="12">
    <location>
        <begin position="126"/>
        <end position="129"/>
    </location>
</feature>
<feature type="strand" evidence="12">
    <location>
        <begin position="131"/>
        <end position="133"/>
    </location>
</feature>
<feature type="helix" evidence="12">
    <location>
        <begin position="134"/>
        <end position="144"/>
    </location>
</feature>
<feature type="helix" evidence="12">
    <location>
        <begin position="150"/>
        <end position="152"/>
    </location>
</feature>
<feature type="strand" evidence="12">
    <location>
        <begin position="153"/>
        <end position="155"/>
    </location>
</feature>
<feature type="helix" evidence="12">
    <location>
        <begin position="158"/>
        <end position="172"/>
    </location>
</feature>
<feature type="helix" evidence="12">
    <location>
        <begin position="176"/>
        <end position="178"/>
    </location>
</feature>
<feature type="strand" evidence="12">
    <location>
        <begin position="183"/>
        <end position="186"/>
    </location>
</feature>
<feature type="strand" evidence="12">
    <location>
        <begin position="193"/>
        <end position="195"/>
    </location>
</feature>
<feature type="strand" evidence="12">
    <location>
        <begin position="200"/>
        <end position="203"/>
    </location>
</feature>
<feature type="strand" evidence="12">
    <location>
        <begin position="206"/>
        <end position="209"/>
    </location>
</feature>
<feature type="helix" evidence="12">
    <location>
        <begin position="210"/>
        <end position="214"/>
    </location>
</feature>
<feature type="helix" evidence="12">
    <location>
        <begin position="217"/>
        <end position="220"/>
    </location>
</feature>
<feature type="helix" evidence="12">
    <location>
        <begin position="223"/>
        <end position="239"/>
    </location>
</feature>
<feature type="helix" evidence="12">
    <location>
        <begin position="245"/>
        <end position="260"/>
    </location>
</feature>
<feature type="strand" evidence="12">
    <location>
        <begin position="268"/>
        <end position="273"/>
    </location>
</feature>
<feature type="helix" evidence="12">
    <location>
        <begin position="277"/>
        <end position="279"/>
    </location>
</feature>
<feature type="strand" evidence="12">
    <location>
        <begin position="284"/>
        <end position="293"/>
    </location>
</feature>
<feature type="strand" evidence="12">
    <location>
        <begin position="296"/>
        <end position="299"/>
    </location>
</feature>
<feature type="helix" evidence="12">
    <location>
        <begin position="307"/>
        <end position="330"/>
    </location>
</feature>
<proteinExistence type="evidence at protein level"/>
<sequence>MAKEPVRVLVTGAAGQIGYALVPMIARGIMLGADQPVILHMLDIPPAAEALNGVKMELIDAAFPLLKGVVATTDAVEGCTGVNVAVMVGGFPRKEGMERKDVMSKNVSIYKSQAAALEKHAAPNCKVLVVANPANTNALILKEFAPSIPEKNISCLTRLDHNRALGQISERLSVPVSDVKNVIIWGNHSSSQYPDVNHAKVQTSSGEKPVRELVKDDAWLDGEFISTVQQRGAAIIKARKLSSALSAASSACDHIRDWVLGTPEGTFVSMGVYSDGSYSVPSGLIYSFPVTCRNGDWSIVQGLPIDEVSRKKMDLTAEELKEEKDLAYSCLS</sequence>
<protein>
    <recommendedName>
        <fullName evidence="8">Malate dehydrogenase 1, cytoplasmic</fullName>
        <ecNumber evidence="6">1.1.1.37</ecNumber>
    </recommendedName>
    <alternativeName>
        <fullName evidence="8">Cytosolic NAD-dependent malate dehydrogenase 1</fullName>
        <shortName evidence="7">cNAD-MDH1</shortName>
    </alternativeName>
    <alternativeName>
        <fullName evidence="7">Cytosolic malate dehydrogenase 1</fullName>
        <shortName evidence="8">Cytosolic MDH1</shortName>
    </alternativeName>
</protein>
<comment type="function">
    <text evidence="9">Catalyzes a reversible NAD-dependent dehydrogenase reaction involved in central metabolism and redox homeostasis between organellar compartments.</text>
</comment>
<comment type="catalytic activity">
    <reaction evidence="2 6">
        <text>(S)-malate + NAD(+) = oxaloacetate + NADH + H(+)</text>
        <dbReference type="Rhea" id="RHEA:21432"/>
        <dbReference type="ChEBI" id="CHEBI:15378"/>
        <dbReference type="ChEBI" id="CHEBI:15589"/>
        <dbReference type="ChEBI" id="CHEBI:16452"/>
        <dbReference type="ChEBI" id="CHEBI:57540"/>
        <dbReference type="ChEBI" id="CHEBI:57945"/>
        <dbReference type="EC" id="1.1.1.37"/>
    </reaction>
</comment>
<comment type="activity regulation">
    <text evidence="6">Decreased activity upon treatment with hydrogen peroxide.</text>
</comment>
<comment type="biophysicochemical properties">
    <kinetics>
        <KM evidence="6">238 uM for oxaloacetate</KM>
        <KM evidence="6">72 uM for NADH</KM>
        <text evidence="6">kcat is 608 sec(-1) with oxaloacetate as substrate (PubMed:29194485). kcat is 677 sec(-1) with NADH as substrate (PubMed:29194485).</text>
    </kinetics>
</comment>
<comment type="subunit">
    <text evidence="5 6">Forms a homodimer (PubMed:29194485). Forms a disulfide-linked homodimer upon oxidation (PubMed:29194485). Interacts with 14-3-3-like proteins GRF1 GRF3 and GRF8 (PubMed:22104211). Interacts with TRX1, TRX2, TRX3, TRX4 and TRX5 (PubMed:29194485).</text>
</comment>
<comment type="subcellular location">
    <subcellularLocation>
        <location evidence="8">Cytoplasm</location>
    </subcellularLocation>
</comment>
<comment type="tissue specificity">
    <text evidence="4">Expressed in rosette leaves.</text>
</comment>
<comment type="similarity">
    <text evidence="8">Belongs to the LDH/MDH superfamily. MDH type 2 family.</text>
</comment>
<organism>
    <name type="scientific">Arabidopsis thaliana</name>
    <name type="common">Mouse-ear cress</name>
    <dbReference type="NCBI Taxonomy" id="3702"/>
    <lineage>
        <taxon>Eukaryota</taxon>
        <taxon>Viridiplantae</taxon>
        <taxon>Streptophyta</taxon>
        <taxon>Embryophyta</taxon>
        <taxon>Tracheophyta</taxon>
        <taxon>Spermatophyta</taxon>
        <taxon>Magnoliopsida</taxon>
        <taxon>eudicotyledons</taxon>
        <taxon>Gunneridae</taxon>
        <taxon>Pentapetalae</taxon>
        <taxon>rosids</taxon>
        <taxon>malvids</taxon>
        <taxon>Brassicales</taxon>
        <taxon>Brassicaceae</taxon>
        <taxon>Camelineae</taxon>
        <taxon>Arabidopsis</taxon>
    </lineage>
</organism>
<name>MDHC1_ARATH</name>
<evidence type="ECO:0000250" key="1">
    <source>
        <dbReference type="UniProtKB" id="P11708"/>
    </source>
</evidence>
<evidence type="ECO:0000255" key="2">
    <source>
        <dbReference type="PROSITE-ProRule" id="PRU10004"/>
    </source>
</evidence>
<evidence type="ECO:0000269" key="3">
    <source>
    </source>
</evidence>
<evidence type="ECO:0000269" key="4">
    <source>
    </source>
</evidence>
<evidence type="ECO:0000269" key="5">
    <source>
    </source>
</evidence>
<evidence type="ECO:0000269" key="6">
    <source>
    </source>
</evidence>
<evidence type="ECO:0000303" key="7">
    <source>
    </source>
</evidence>
<evidence type="ECO:0000305" key="8"/>
<evidence type="ECO:0000305" key="9">
    <source>
    </source>
</evidence>
<evidence type="ECO:0007744" key="10">
    <source>
        <dbReference type="PDB" id="5NUE"/>
    </source>
</evidence>
<evidence type="ECO:0007744" key="11">
    <source>
        <dbReference type="PDB" id="5NUF"/>
    </source>
</evidence>
<evidence type="ECO:0007829" key="12">
    <source>
        <dbReference type="PDB" id="5NUE"/>
    </source>
</evidence>